<keyword id="KW-1185">Reference proteome</keyword>
<keyword id="KW-0687">Ribonucleoprotein</keyword>
<keyword id="KW-0689">Ribosomal protein</keyword>
<reference key="1">
    <citation type="journal article" date="2011" name="J. Bacteriol.">
        <title>Genome of Ochrobactrum anthropi ATCC 49188 T, a versatile opportunistic pathogen and symbiont of several eukaryotic hosts.</title>
        <authorList>
            <person name="Chain P.S."/>
            <person name="Lang D.M."/>
            <person name="Comerci D.J."/>
            <person name="Malfatti S.A."/>
            <person name="Vergez L.M."/>
            <person name="Shin M."/>
            <person name="Ugalde R.A."/>
            <person name="Garcia E."/>
            <person name="Tolmasky M.E."/>
        </authorList>
    </citation>
    <scope>NUCLEOTIDE SEQUENCE [LARGE SCALE GENOMIC DNA]</scope>
    <source>
        <strain>ATCC 49188 / DSM 6882 / CCUG 24695 / JCM 21032 / LMG 3331 / NBRC 15819 / NCTC 12168 / Alc 37</strain>
    </source>
</reference>
<gene>
    <name evidence="1" type="primary">rpmH</name>
    <name type="ordered locus">Oant_1363</name>
</gene>
<sequence>MKRTYQPSKIVRKRRHGFRARMATTGGRKVLTARRSRGRKRLSA</sequence>
<accession>A6WYM6</accession>
<proteinExistence type="inferred from homology"/>
<feature type="chain" id="PRO_1000013392" description="Large ribosomal subunit protein bL34">
    <location>
        <begin position="1"/>
        <end position="44"/>
    </location>
</feature>
<organism>
    <name type="scientific">Brucella anthropi (strain ATCC 49188 / DSM 6882 / CCUG 24695 / JCM 21032 / LMG 3331 / NBRC 15819 / NCTC 12168 / Alc 37)</name>
    <name type="common">Ochrobactrum anthropi</name>
    <dbReference type="NCBI Taxonomy" id="439375"/>
    <lineage>
        <taxon>Bacteria</taxon>
        <taxon>Pseudomonadati</taxon>
        <taxon>Pseudomonadota</taxon>
        <taxon>Alphaproteobacteria</taxon>
        <taxon>Hyphomicrobiales</taxon>
        <taxon>Brucellaceae</taxon>
        <taxon>Brucella/Ochrobactrum group</taxon>
        <taxon>Brucella</taxon>
    </lineage>
</organism>
<evidence type="ECO:0000255" key="1">
    <source>
        <dbReference type="HAMAP-Rule" id="MF_00391"/>
    </source>
</evidence>
<evidence type="ECO:0000305" key="2"/>
<dbReference type="EMBL" id="CP000758">
    <property type="protein sequence ID" value="ABS14080.1"/>
    <property type="molecule type" value="Genomic_DNA"/>
</dbReference>
<dbReference type="RefSeq" id="WP_010659431.1">
    <property type="nucleotide sequence ID" value="NC_009667.1"/>
</dbReference>
<dbReference type="SMR" id="A6WYM6"/>
<dbReference type="STRING" id="439375.Oant_1363"/>
<dbReference type="GeneID" id="61318133"/>
<dbReference type="KEGG" id="oan:Oant_1363"/>
<dbReference type="eggNOG" id="COG0230">
    <property type="taxonomic scope" value="Bacteria"/>
</dbReference>
<dbReference type="HOGENOM" id="CLU_129938_2_0_5"/>
<dbReference type="Proteomes" id="UP000002301">
    <property type="component" value="Chromosome 1"/>
</dbReference>
<dbReference type="GO" id="GO:1990904">
    <property type="term" value="C:ribonucleoprotein complex"/>
    <property type="evidence" value="ECO:0007669"/>
    <property type="project" value="UniProtKB-KW"/>
</dbReference>
<dbReference type="GO" id="GO:0005840">
    <property type="term" value="C:ribosome"/>
    <property type="evidence" value="ECO:0007669"/>
    <property type="project" value="UniProtKB-KW"/>
</dbReference>
<dbReference type="GO" id="GO:0003735">
    <property type="term" value="F:structural constituent of ribosome"/>
    <property type="evidence" value="ECO:0007669"/>
    <property type="project" value="InterPro"/>
</dbReference>
<dbReference type="GO" id="GO:0006412">
    <property type="term" value="P:translation"/>
    <property type="evidence" value="ECO:0007669"/>
    <property type="project" value="UniProtKB-UniRule"/>
</dbReference>
<dbReference type="FunFam" id="1.10.287.3980:FF:000001">
    <property type="entry name" value="Mitochondrial ribosomal protein L34"/>
    <property type="match status" value="1"/>
</dbReference>
<dbReference type="Gene3D" id="1.10.287.3980">
    <property type="match status" value="1"/>
</dbReference>
<dbReference type="HAMAP" id="MF_00391">
    <property type="entry name" value="Ribosomal_bL34"/>
    <property type="match status" value="1"/>
</dbReference>
<dbReference type="InterPro" id="IPR000271">
    <property type="entry name" value="Ribosomal_bL34"/>
</dbReference>
<dbReference type="InterPro" id="IPR020939">
    <property type="entry name" value="Ribosomal_bL34_CS"/>
</dbReference>
<dbReference type="NCBIfam" id="TIGR01030">
    <property type="entry name" value="rpmH_bact"/>
    <property type="match status" value="1"/>
</dbReference>
<dbReference type="PANTHER" id="PTHR14503:SF4">
    <property type="entry name" value="LARGE RIBOSOMAL SUBUNIT PROTEIN BL34M"/>
    <property type="match status" value="1"/>
</dbReference>
<dbReference type="PANTHER" id="PTHR14503">
    <property type="entry name" value="MITOCHONDRIAL RIBOSOMAL PROTEIN 34 FAMILY MEMBER"/>
    <property type="match status" value="1"/>
</dbReference>
<dbReference type="Pfam" id="PF00468">
    <property type="entry name" value="Ribosomal_L34"/>
    <property type="match status" value="1"/>
</dbReference>
<dbReference type="PROSITE" id="PS00784">
    <property type="entry name" value="RIBOSOMAL_L34"/>
    <property type="match status" value="1"/>
</dbReference>
<comment type="similarity">
    <text evidence="1">Belongs to the bacterial ribosomal protein bL34 family.</text>
</comment>
<name>RL34_BRUA4</name>
<protein>
    <recommendedName>
        <fullName evidence="1">Large ribosomal subunit protein bL34</fullName>
    </recommendedName>
    <alternativeName>
        <fullName evidence="2">50S ribosomal protein L34</fullName>
    </alternativeName>
</protein>